<organism>
    <name type="scientific">Rhizobium meliloti (strain 1021)</name>
    <name type="common">Ensifer meliloti</name>
    <name type="synonym">Sinorhizobium meliloti</name>
    <dbReference type="NCBI Taxonomy" id="266834"/>
    <lineage>
        <taxon>Bacteria</taxon>
        <taxon>Pseudomonadati</taxon>
        <taxon>Pseudomonadota</taxon>
        <taxon>Alphaproteobacteria</taxon>
        <taxon>Hyphomicrobiales</taxon>
        <taxon>Rhizobiaceae</taxon>
        <taxon>Sinorhizobium/Ensifer group</taxon>
        <taxon>Sinorhizobium</taxon>
    </lineage>
</organism>
<dbReference type="EC" id="4.2.1.11" evidence="1"/>
<dbReference type="EMBL" id="AL591688">
    <property type="protein sequence ID" value="CAC46022.1"/>
    <property type="molecule type" value="Genomic_DNA"/>
</dbReference>
<dbReference type="RefSeq" id="NP_385549.1">
    <property type="nucleotide sequence ID" value="NC_003047.1"/>
</dbReference>
<dbReference type="RefSeq" id="WP_010969226.1">
    <property type="nucleotide sequence ID" value="NC_003047.1"/>
</dbReference>
<dbReference type="SMR" id="Q92Q98"/>
<dbReference type="EnsemblBacteria" id="CAC46022">
    <property type="protein sequence ID" value="CAC46022"/>
    <property type="gene ID" value="SMc01028"/>
</dbReference>
<dbReference type="KEGG" id="sme:SMc01028"/>
<dbReference type="PATRIC" id="fig|266834.11.peg.2863"/>
<dbReference type="eggNOG" id="COG0148">
    <property type="taxonomic scope" value="Bacteria"/>
</dbReference>
<dbReference type="HOGENOM" id="CLU_031223_2_1_5"/>
<dbReference type="OrthoDB" id="9804716at2"/>
<dbReference type="UniPathway" id="UPA00109">
    <property type="reaction ID" value="UER00187"/>
</dbReference>
<dbReference type="Proteomes" id="UP000001976">
    <property type="component" value="Chromosome"/>
</dbReference>
<dbReference type="GO" id="GO:0009986">
    <property type="term" value="C:cell surface"/>
    <property type="evidence" value="ECO:0007669"/>
    <property type="project" value="UniProtKB-SubCell"/>
</dbReference>
<dbReference type="GO" id="GO:0005576">
    <property type="term" value="C:extracellular region"/>
    <property type="evidence" value="ECO:0007669"/>
    <property type="project" value="UniProtKB-SubCell"/>
</dbReference>
<dbReference type="GO" id="GO:0000015">
    <property type="term" value="C:phosphopyruvate hydratase complex"/>
    <property type="evidence" value="ECO:0007669"/>
    <property type="project" value="InterPro"/>
</dbReference>
<dbReference type="GO" id="GO:0000287">
    <property type="term" value="F:magnesium ion binding"/>
    <property type="evidence" value="ECO:0007669"/>
    <property type="project" value="UniProtKB-UniRule"/>
</dbReference>
<dbReference type="GO" id="GO:0004634">
    <property type="term" value="F:phosphopyruvate hydratase activity"/>
    <property type="evidence" value="ECO:0007669"/>
    <property type="project" value="UniProtKB-UniRule"/>
</dbReference>
<dbReference type="GO" id="GO:0006096">
    <property type="term" value="P:glycolytic process"/>
    <property type="evidence" value="ECO:0007669"/>
    <property type="project" value="UniProtKB-UniRule"/>
</dbReference>
<dbReference type="CDD" id="cd03313">
    <property type="entry name" value="enolase"/>
    <property type="match status" value="1"/>
</dbReference>
<dbReference type="FunFam" id="3.20.20.120:FF:000001">
    <property type="entry name" value="Enolase"/>
    <property type="match status" value="1"/>
</dbReference>
<dbReference type="FunFam" id="3.30.390.10:FF:000001">
    <property type="entry name" value="Enolase"/>
    <property type="match status" value="1"/>
</dbReference>
<dbReference type="Gene3D" id="3.20.20.120">
    <property type="entry name" value="Enolase-like C-terminal domain"/>
    <property type="match status" value="1"/>
</dbReference>
<dbReference type="Gene3D" id="3.30.390.10">
    <property type="entry name" value="Enolase-like, N-terminal domain"/>
    <property type="match status" value="1"/>
</dbReference>
<dbReference type="HAMAP" id="MF_00318">
    <property type="entry name" value="Enolase"/>
    <property type="match status" value="1"/>
</dbReference>
<dbReference type="InterPro" id="IPR000941">
    <property type="entry name" value="Enolase"/>
</dbReference>
<dbReference type="InterPro" id="IPR036849">
    <property type="entry name" value="Enolase-like_C_sf"/>
</dbReference>
<dbReference type="InterPro" id="IPR029017">
    <property type="entry name" value="Enolase-like_N"/>
</dbReference>
<dbReference type="InterPro" id="IPR020810">
    <property type="entry name" value="Enolase_C"/>
</dbReference>
<dbReference type="InterPro" id="IPR020809">
    <property type="entry name" value="Enolase_CS"/>
</dbReference>
<dbReference type="InterPro" id="IPR020811">
    <property type="entry name" value="Enolase_N"/>
</dbReference>
<dbReference type="NCBIfam" id="TIGR01060">
    <property type="entry name" value="eno"/>
    <property type="match status" value="1"/>
</dbReference>
<dbReference type="PANTHER" id="PTHR11902">
    <property type="entry name" value="ENOLASE"/>
    <property type="match status" value="1"/>
</dbReference>
<dbReference type="PANTHER" id="PTHR11902:SF1">
    <property type="entry name" value="ENOLASE"/>
    <property type="match status" value="1"/>
</dbReference>
<dbReference type="Pfam" id="PF00113">
    <property type="entry name" value="Enolase_C"/>
    <property type="match status" value="1"/>
</dbReference>
<dbReference type="Pfam" id="PF03952">
    <property type="entry name" value="Enolase_N"/>
    <property type="match status" value="1"/>
</dbReference>
<dbReference type="PIRSF" id="PIRSF001400">
    <property type="entry name" value="Enolase"/>
    <property type="match status" value="1"/>
</dbReference>
<dbReference type="PRINTS" id="PR00148">
    <property type="entry name" value="ENOLASE"/>
</dbReference>
<dbReference type="SFLD" id="SFLDF00002">
    <property type="entry name" value="enolase"/>
    <property type="match status" value="1"/>
</dbReference>
<dbReference type="SFLD" id="SFLDG00178">
    <property type="entry name" value="enolase"/>
    <property type="match status" value="1"/>
</dbReference>
<dbReference type="SMART" id="SM01192">
    <property type="entry name" value="Enolase_C"/>
    <property type="match status" value="1"/>
</dbReference>
<dbReference type="SMART" id="SM01193">
    <property type="entry name" value="Enolase_N"/>
    <property type="match status" value="1"/>
</dbReference>
<dbReference type="SUPFAM" id="SSF51604">
    <property type="entry name" value="Enolase C-terminal domain-like"/>
    <property type="match status" value="1"/>
</dbReference>
<dbReference type="SUPFAM" id="SSF54826">
    <property type="entry name" value="Enolase N-terminal domain-like"/>
    <property type="match status" value="1"/>
</dbReference>
<dbReference type="PROSITE" id="PS00164">
    <property type="entry name" value="ENOLASE"/>
    <property type="match status" value="1"/>
</dbReference>
<comment type="function">
    <text evidence="1">Catalyzes the reversible conversion of 2-phosphoglycerate (2-PG) into phosphoenolpyruvate (PEP). It is essential for the degradation of carbohydrates via glycolysis.</text>
</comment>
<comment type="catalytic activity">
    <reaction evidence="1">
        <text>(2R)-2-phosphoglycerate = phosphoenolpyruvate + H2O</text>
        <dbReference type="Rhea" id="RHEA:10164"/>
        <dbReference type="ChEBI" id="CHEBI:15377"/>
        <dbReference type="ChEBI" id="CHEBI:58289"/>
        <dbReference type="ChEBI" id="CHEBI:58702"/>
        <dbReference type="EC" id="4.2.1.11"/>
    </reaction>
</comment>
<comment type="cofactor">
    <cofactor evidence="1">
        <name>Mg(2+)</name>
        <dbReference type="ChEBI" id="CHEBI:18420"/>
    </cofactor>
    <text evidence="1">Binds a second Mg(2+) ion via substrate during catalysis.</text>
</comment>
<comment type="pathway">
    <text evidence="1">Carbohydrate degradation; glycolysis; pyruvate from D-glyceraldehyde 3-phosphate: step 4/5.</text>
</comment>
<comment type="subcellular location">
    <subcellularLocation>
        <location evidence="1">Cytoplasm</location>
    </subcellularLocation>
    <subcellularLocation>
        <location evidence="1">Secreted</location>
    </subcellularLocation>
    <subcellularLocation>
        <location evidence="1">Cell surface</location>
    </subcellularLocation>
    <text evidence="1">Fractions of enolase are present in both the cytoplasm and on the cell surface.</text>
</comment>
<comment type="similarity">
    <text evidence="1">Belongs to the enolase family.</text>
</comment>
<accession>Q92Q98</accession>
<reference key="1">
    <citation type="journal article" date="2001" name="Proc. Natl. Acad. Sci. U.S.A.">
        <title>Analysis of the chromosome sequence of the legume symbiont Sinorhizobium meliloti strain 1021.</title>
        <authorList>
            <person name="Capela D."/>
            <person name="Barloy-Hubler F."/>
            <person name="Gouzy J."/>
            <person name="Bothe G."/>
            <person name="Ampe F."/>
            <person name="Batut J."/>
            <person name="Boistard P."/>
            <person name="Becker A."/>
            <person name="Boutry M."/>
            <person name="Cadieu E."/>
            <person name="Dreano S."/>
            <person name="Gloux S."/>
            <person name="Godrie T."/>
            <person name="Goffeau A."/>
            <person name="Kahn D."/>
            <person name="Kiss E."/>
            <person name="Lelaure V."/>
            <person name="Masuy D."/>
            <person name="Pohl T."/>
            <person name="Portetelle D."/>
            <person name="Puehler A."/>
            <person name="Purnelle B."/>
            <person name="Ramsperger U."/>
            <person name="Renard C."/>
            <person name="Thebault P."/>
            <person name="Vandenbol M."/>
            <person name="Weidner S."/>
            <person name="Galibert F."/>
        </authorList>
    </citation>
    <scope>NUCLEOTIDE SEQUENCE [LARGE SCALE GENOMIC DNA]</scope>
    <source>
        <strain>1021</strain>
    </source>
</reference>
<reference key="2">
    <citation type="journal article" date="2001" name="Science">
        <title>The composite genome of the legume symbiont Sinorhizobium meliloti.</title>
        <authorList>
            <person name="Galibert F."/>
            <person name="Finan T.M."/>
            <person name="Long S.R."/>
            <person name="Puehler A."/>
            <person name="Abola P."/>
            <person name="Ampe F."/>
            <person name="Barloy-Hubler F."/>
            <person name="Barnett M.J."/>
            <person name="Becker A."/>
            <person name="Boistard P."/>
            <person name="Bothe G."/>
            <person name="Boutry M."/>
            <person name="Bowser L."/>
            <person name="Buhrmester J."/>
            <person name="Cadieu E."/>
            <person name="Capela D."/>
            <person name="Chain P."/>
            <person name="Cowie A."/>
            <person name="Davis R.W."/>
            <person name="Dreano S."/>
            <person name="Federspiel N.A."/>
            <person name="Fisher R.F."/>
            <person name="Gloux S."/>
            <person name="Godrie T."/>
            <person name="Goffeau A."/>
            <person name="Golding B."/>
            <person name="Gouzy J."/>
            <person name="Gurjal M."/>
            <person name="Hernandez-Lucas I."/>
            <person name="Hong A."/>
            <person name="Huizar L."/>
            <person name="Hyman R.W."/>
            <person name="Jones T."/>
            <person name="Kahn D."/>
            <person name="Kahn M.L."/>
            <person name="Kalman S."/>
            <person name="Keating D.H."/>
            <person name="Kiss E."/>
            <person name="Komp C."/>
            <person name="Lelaure V."/>
            <person name="Masuy D."/>
            <person name="Palm C."/>
            <person name="Peck M.C."/>
            <person name="Pohl T.M."/>
            <person name="Portetelle D."/>
            <person name="Purnelle B."/>
            <person name="Ramsperger U."/>
            <person name="Surzycki R."/>
            <person name="Thebault P."/>
            <person name="Vandenbol M."/>
            <person name="Vorhoelter F.J."/>
            <person name="Weidner S."/>
            <person name="Wells D.H."/>
            <person name="Wong K."/>
            <person name="Yeh K.-C."/>
            <person name="Batut J."/>
        </authorList>
    </citation>
    <scope>NUCLEOTIDE SEQUENCE [LARGE SCALE GENOMIC DNA]</scope>
    <source>
        <strain>1021</strain>
    </source>
</reference>
<feature type="chain" id="PRO_0000133955" description="Enolase">
    <location>
        <begin position="1"/>
        <end position="424"/>
    </location>
</feature>
<feature type="active site" description="Proton donor" evidence="1">
    <location>
        <position position="204"/>
    </location>
</feature>
<feature type="active site" description="Proton acceptor" evidence="1">
    <location>
        <position position="336"/>
    </location>
</feature>
<feature type="binding site" evidence="1">
    <location>
        <position position="162"/>
    </location>
    <ligand>
        <name>(2R)-2-phosphoglycerate</name>
        <dbReference type="ChEBI" id="CHEBI:58289"/>
    </ligand>
</feature>
<feature type="binding site" evidence="1">
    <location>
        <position position="241"/>
    </location>
    <ligand>
        <name>Mg(2+)</name>
        <dbReference type="ChEBI" id="CHEBI:18420"/>
    </ligand>
</feature>
<feature type="binding site" evidence="1">
    <location>
        <position position="284"/>
    </location>
    <ligand>
        <name>Mg(2+)</name>
        <dbReference type="ChEBI" id="CHEBI:18420"/>
    </ligand>
</feature>
<feature type="binding site" evidence="1">
    <location>
        <position position="311"/>
    </location>
    <ligand>
        <name>Mg(2+)</name>
        <dbReference type="ChEBI" id="CHEBI:18420"/>
    </ligand>
</feature>
<feature type="binding site" evidence="1">
    <location>
        <position position="336"/>
    </location>
    <ligand>
        <name>(2R)-2-phosphoglycerate</name>
        <dbReference type="ChEBI" id="CHEBI:58289"/>
    </ligand>
</feature>
<feature type="binding site" evidence="1">
    <location>
        <position position="365"/>
    </location>
    <ligand>
        <name>(2R)-2-phosphoglycerate</name>
        <dbReference type="ChEBI" id="CHEBI:58289"/>
    </ligand>
</feature>
<feature type="binding site" evidence="1">
    <location>
        <position position="366"/>
    </location>
    <ligand>
        <name>(2R)-2-phosphoglycerate</name>
        <dbReference type="ChEBI" id="CHEBI:58289"/>
    </ligand>
</feature>
<feature type="binding site" evidence="1">
    <location>
        <position position="387"/>
    </location>
    <ligand>
        <name>(2R)-2-phosphoglycerate</name>
        <dbReference type="ChEBI" id="CHEBI:58289"/>
    </ligand>
</feature>
<protein>
    <recommendedName>
        <fullName evidence="1">Enolase</fullName>
        <ecNumber evidence="1">4.2.1.11</ecNumber>
    </recommendedName>
    <alternativeName>
        <fullName evidence="1">2-phospho-D-glycerate hydro-lyase</fullName>
    </alternativeName>
    <alternativeName>
        <fullName evidence="1">2-phosphoglycerate dehydratase</fullName>
    </alternativeName>
</protein>
<name>ENO_RHIME</name>
<gene>
    <name evidence="1" type="primary">eno</name>
    <name type="ordered locus">R01443</name>
    <name type="ORF">SMc01028</name>
</gene>
<keyword id="KW-0963">Cytoplasm</keyword>
<keyword id="KW-0324">Glycolysis</keyword>
<keyword id="KW-0456">Lyase</keyword>
<keyword id="KW-0460">Magnesium</keyword>
<keyword id="KW-0479">Metal-binding</keyword>
<keyword id="KW-1185">Reference proteome</keyword>
<keyword id="KW-0964">Secreted</keyword>
<evidence type="ECO:0000255" key="1">
    <source>
        <dbReference type="HAMAP-Rule" id="MF_00318"/>
    </source>
</evidence>
<proteinExistence type="inferred from homology"/>
<sequence length="424" mass="44996">MTAIIDIIGREILDSRGNPTVEVDVHLEDGSFGRAAVPSGASTGAHEAVELRDGGTRYLGKGVERAVDAVNGEIFEAIGGLDAENQIQIDRTMIELDGTPNKSRLGANAILGVSLAVAKAAAEASGLPLYRYVGGPNAHLLPVPMMNIINGGAHADNPIDFQEFMIMPVGAETLKDAVRMGSEVFHTLKKQLAADGHNTNVGDEGGFAPGLASAPAALDFIMKSIEKAGYKPGEDMYVALDCASTEFFKDGKYVLEGEGRTLEPGAMAEYLAELAGKYPIISIEDGMAEDDWDGWKSLTDLVGNKCQLVGDDLFVTNSARLRDGIKMGVANSILVKVNQIGSLSETLDAVETAHKARYTAVMSHRSGETEDSTIADLAVATNCGQIKTGSLARSDRLAKYNQLIRIEEQLGPQAQYAGRSVLRG</sequence>